<proteinExistence type="inferred from homology"/>
<comment type="function">
    <text evidence="1">Polymerizes as an extended structure around the baseplate-tail tube complex. During ejection, the sheath shifts to a contracted form, thereby making the inner tail tube protrude through the host cell envelope.</text>
</comment>
<comment type="subunit">
    <text evidence="1">Homomultimer.</text>
</comment>
<comment type="subcellular location">
    <subcellularLocation>
        <location evidence="1">Virion</location>
    </subcellularLocation>
    <subcellularLocation>
        <location evidence="1">Host cytoplasm</location>
    </subcellularLocation>
    <text evidence="1">Tail.</text>
</comment>
<comment type="similarity">
    <text evidence="2">Belongs to the myoviridae tail sheath protein family.</text>
</comment>
<gene>
    <name evidence="3" type="primary">xkdK</name>
</gene>
<organismHost>
    <name type="scientific">Clostridioides difficile</name>
    <name type="common">Peptoclostridium difficile</name>
    <dbReference type="NCBI Taxonomy" id="1496"/>
</organismHost>
<accession>Q24LI4</accession>
<organism>
    <name type="scientific">Clostridium phage phiCD119 (strain Clostridium difficile/United States/Govind/2006)</name>
    <name type="common">Bacteriophage phiCD119</name>
    <dbReference type="NCBI Taxonomy" id="2883936"/>
    <lineage>
        <taxon>Viruses</taxon>
        <taxon>Duplodnaviria</taxon>
        <taxon>Heunggongvirae</taxon>
        <taxon>Uroviricota</taxon>
        <taxon>Caudoviricetes</taxon>
        <taxon>Lubbockvirus</taxon>
        <taxon>Lubbockvirus CD119</taxon>
    </lineage>
</organism>
<protein>
    <recommendedName>
        <fullName>Tail sheath protein</fullName>
        <shortName>TSP</shortName>
    </recommendedName>
</protein>
<name>TSP_BPPCD</name>
<evidence type="ECO:0000250" key="1">
    <source>
        <dbReference type="UniProtKB" id="P79678"/>
    </source>
</evidence>
<evidence type="ECO:0000305" key="2"/>
<evidence type="ECO:0000312" key="3">
    <source>
        <dbReference type="EMBL" id="AAZ32267.1"/>
    </source>
</evidence>
<feature type="chain" id="PRO_0000432774" description="Tail sheath protein">
    <location>
        <begin position="1"/>
        <end position="356"/>
    </location>
</feature>
<dbReference type="EMBL" id="AY855346">
    <property type="protein sequence ID" value="AAZ32267.1"/>
    <property type="molecule type" value="Genomic_DNA"/>
</dbReference>
<dbReference type="RefSeq" id="YP_529565.1">
    <property type="nucleotide sequence ID" value="NC_007917.1"/>
</dbReference>
<dbReference type="SMR" id="Q24LI4"/>
<dbReference type="GeneID" id="3974491"/>
<dbReference type="KEGG" id="vg:3974491"/>
<dbReference type="Proteomes" id="UP000006649">
    <property type="component" value="Segment"/>
</dbReference>
<dbReference type="GO" id="GO:0030430">
    <property type="term" value="C:host cell cytoplasm"/>
    <property type="evidence" value="ECO:0007669"/>
    <property type="project" value="UniProtKB-SubCell"/>
</dbReference>
<dbReference type="GO" id="GO:0098027">
    <property type="term" value="C:virus tail, sheath"/>
    <property type="evidence" value="ECO:0007669"/>
    <property type="project" value="UniProtKB-KW"/>
</dbReference>
<dbReference type="GO" id="GO:0099000">
    <property type="term" value="P:symbiont genome ejection through host cell envelope, contractile tail mechanism"/>
    <property type="evidence" value="ECO:0007669"/>
    <property type="project" value="UniProtKB-KW"/>
</dbReference>
<dbReference type="Gene3D" id="3.30.1370.220">
    <property type="match status" value="1"/>
</dbReference>
<dbReference type="Gene3D" id="3.40.50.11790">
    <property type="match status" value="1"/>
</dbReference>
<dbReference type="InterPro" id="IPR035089">
    <property type="entry name" value="Phage_sheath_subtilisin"/>
</dbReference>
<dbReference type="InterPro" id="IPR020287">
    <property type="entry name" value="Tail_sheath_C"/>
</dbReference>
<dbReference type="Pfam" id="PF04984">
    <property type="entry name" value="Phage_sheath_1"/>
    <property type="match status" value="1"/>
</dbReference>
<dbReference type="Pfam" id="PF17482">
    <property type="entry name" value="Phage_sheath_1C"/>
    <property type="match status" value="1"/>
</dbReference>
<keyword id="KW-1035">Host cytoplasm</keyword>
<keyword id="KW-1185">Reference proteome</keyword>
<keyword id="KW-1242">Viral contractile tail ejection system</keyword>
<keyword id="KW-1171">Viral genome ejection through host cell envelope</keyword>
<keyword id="KW-1162">Viral penetration into host cytoplasm</keyword>
<keyword id="KW-1227">Viral tail protein</keyword>
<keyword id="KW-1229">Viral tail sheath protein</keyword>
<keyword id="KW-0946">Virion</keyword>
<keyword id="KW-1160">Virus entry into host cell</keyword>
<reference key="1">
    <citation type="journal article" date="2006" name="J. Bacteriol.">
        <title>Genomic organization and molecular characterization of Clostridium difficile bacteriophage PhiCD119.</title>
        <authorList>
            <person name="Govind R."/>
            <person name="Fralick J.A."/>
            <person name="Rolfe R.D."/>
        </authorList>
    </citation>
    <scope>NUCLEOTIDE SEQUENCE [LARGE SCALE GENOMIC DNA]</scope>
</reference>
<sequence length="356" mass="40035">MAGLVNINIEFKELATSFIQRSKAGIVAIILKDTTKMYKELTSEDDIPISLSADNKKYIKYGFVGATDNEKVLRPSKVIISTFTEDGKVEDILEELESVEFNYLCMPEAIEAEKTKIVTWIKKIREEESTEAKAVLANIKADNEAIINFTENVVVDGEEITAEKYTTRVASLIASTPNTQSITYAPLDEVESIVKIDKASADAKVQAGELILRRLSGKIRIARGINSLTTLTAEKGEIFQKIKLVDTKDLISKDIKNIYVEKYLRKCPNTYDNKCLFIVAVQSYLTELAKQELIDSNFTVEIDLEKQKEYLEGKKIAVSKMKENEIKEANTGSNGFYLINLKLVDAMEDINIRVQM</sequence>